<name>TPO_MOUSE</name>
<keyword id="KW-0002">3D-structure</keyword>
<keyword id="KW-0025">Alternative splicing</keyword>
<keyword id="KW-0202">Cytokine</keyword>
<keyword id="KW-1015">Disulfide bond</keyword>
<keyword id="KW-0325">Glycoprotein</keyword>
<keyword id="KW-0372">Hormone</keyword>
<keyword id="KW-1185">Reference proteome</keyword>
<keyword id="KW-0964">Secreted</keyword>
<keyword id="KW-0732">Signal</keyword>
<feature type="signal peptide" evidence="2">
    <location>
        <begin position="1"/>
        <end position="21"/>
    </location>
</feature>
<feature type="chain" id="PRO_0000008412" description="Thrombopoietin">
    <location>
        <begin position="22"/>
        <end position="356"/>
    </location>
</feature>
<feature type="region of interest" description="Disordered" evidence="3">
    <location>
        <begin position="291"/>
        <end position="356"/>
    </location>
</feature>
<feature type="compositionally biased region" description="Polar residues" evidence="3">
    <location>
        <begin position="330"/>
        <end position="339"/>
    </location>
</feature>
<feature type="glycosylation site" description="N-linked (GlcNAc...) asparagine" evidence="2">
    <location>
        <position position="197"/>
    </location>
</feature>
<feature type="glycosylation site" description="N-linked (GlcNAc...) asparagine" evidence="2">
    <location>
        <position position="206"/>
    </location>
</feature>
<feature type="glycosylation site" description="N-linked (GlcNAc...) asparagine" evidence="2">
    <location>
        <position position="235"/>
    </location>
</feature>
<feature type="glycosylation site" description="N-linked (GlcNAc...) asparagine" evidence="2">
    <location>
        <position position="249"/>
    </location>
</feature>
<feature type="glycosylation site" description="N-linked (GlcNAc...) asparagine" evidence="2">
    <location>
        <position position="256"/>
    </location>
</feature>
<feature type="glycosylation site" description="N-linked (GlcNAc...) asparagine" evidence="2">
    <location>
        <position position="336"/>
    </location>
</feature>
<feature type="glycosylation site" description="N-linked (GlcNAc...) asparagine" evidence="2">
    <location>
        <position position="351"/>
    </location>
</feature>
<feature type="disulfide bond" evidence="2">
    <location>
        <begin position="28"/>
        <end position="172"/>
    </location>
</feature>
<feature type="disulfide bond" evidence="2">
    <location>
        <begin position="50"/>
        <end position="106"/>
    </location>
</feature>
<feature type="splice variant" id="VSP_001452" description="In isoform 2." evidence="5">
    <location>
        <begin position="133"/>
        <end position="136"/>
    </location>
</feature>
<feature type="helix" evidence="7">
    <location>
        <begin position="30"/>
        <end position="49"/>
    </location>
</feature>
<feature type="strand" evidence="7">
    <location>
        <begin position="60"/>
        <end position="62"/>
    </location>
</feature>
<feature type="helix" evidence="7">
    <location>
        <begin position="69"/>
        <end position="72"/>
    </location>
</feature>
<feature type="strand" evidence="7">
    <location>
        <begin position="73"/>
        <end position="75"/>
    </location>
</feature>
<feature type="helix" evidence="7">
    <location>
        <begin position="77"/>
        <end position="101"/>
    </location>
</feature>
<feature type="helix" evidence="7">
    <location>
        <begin position="106"/>
        <end position="129"/>
    </location>
</feature>
<feature type="strand" evidence="7">
    <location>
        <begin position="140"/>
        <end position="142"/>
    </location>
</feature>
<feature type="helix" evidence="7">
    <location>
        <begin position="145"/>
        <end position="155"/>
    </location>
</feature>
<feature type="turn" evidence="7">
    <location>
        <begin position="156"/>
        <end position="158"/>
    </location>
</feature>
<feature type="helix" evidence="7">
    <location>
        <begin position="159"/>
        <end position="166"/>
    </location>
</feature>
<feature type="helix" evidence="7">
    <location>
        <begin position="168"/>
        <end position="172"/>
    </location>
</feature>
<gene>
    <name type="primary">Thpo</name>
</gene>
<comment type="function">
    <text evidence="1">Lineage-specific cytokine affecting the proliferation and maturation of megakaryocytes from their committed progenitor cells. It acts at a late stage of megakaryocyte development. It may be the major physiological regulator of circulating platelets.</text>
</comment>
<comment type="subcellular location">
    <subcellularLocation>
        <location evidence="1">Secreted</location>
    </subcellularLocation>
</comment>
<comment type="alternative products">
    <event type="alternative splicing"/>
    <isoform>
        <id>P40226-1</id>
        <name>1</name>
        <sequence type="displayed"/>
    </isoform>
    <isoform>
        <id>P40226-2</id>
        <name>2</name>
        <name>TPO-2</name>
        <sequence type="described" ref="VSP_001452"/>
    </isoform>
</comment>
<comment type="tissue specificity">
    <text>Found mainly in the liver, kidney and skeletal muscle.</text>
</comment>
<comment type="induction">
    <text evidence="4">Expression in the liver and bone marrow displays diurnal rhythmicity (a circadian rhythm that is synchronized with the day/night cycle).</text>
</comment>
<comment type="domain">
    <text>Two-domain structure with an erythropoietin-like N-terminal and a Ser/Pro/Thr-rich C-terminal.</text>
</comment>
<comment type="similarity">
    <text evidence="6">Belongs to the EPO/TPO family.</text>
</comment>
<organism>
    <name type="scientific">Mus musculus</name>
    <name type="common">Mouse</name>
    <dbReference type="NCBI Taxonomy" id="10090"/>
    <lineage>
        <taxon>Eukaryota</taxon>
        <taxon>Metazoa</taxon>
        <taxon>Chordata</taxon>
        <taxon>Craniata</taxon>
        <taxon>Vertebrata</taxon>
        <taxon>Euteleostomi</taxon>
        <taxon>Mammalia</taxon>
        <taxon>Eutheria</taxon>
        <taxon>Euarchontoglires</taxon>
        <taxon>Glires</taxon>
        <taxon>Rodentia</taxon>
        <taxon>Myomorpha</taxon>
        <taxon>Muroidea</taxon>
        <taxon>Muridae</taxon>
        <taxon>Murinae</taxon>
        <taxon>Mus</taxon>
        <taxon>Mus</taxon>
    </lineage>
</organism>
<dbReference type="EMBL" id="L34169">
    <property type="protein sequence ID" value="AAA40436.1"/>
    <property type="molecule type" value="mRNA"/>
</dbReference>
<dbReference type="EMBL" id="BC003803">
    <property type="protein sequence ID" value="AAH03803.1"/>
    <property type="molecule type" value="mRNA"/>
</dbReference>
<dbReference type="CCDS" id="CCDS37292.1">
    <molecule id="P40226-1"/>
</dbReference>
<dbReference type="PIR" id="S45330">
    <property type="entry name" value="S45330"/>
</dbReference>
<dbReference type="RefSeq" id="NP_001166976.1">
    <molecule id="P40226-1"/>
    <property type="nucleotide sequence ID" value="NM_001173505.1"/>
</dbReference>
<dbReference type="RefSeq" id="NP_001276823.1">
    <molecule id="P40226-2"/>
    <property type="nucleotide sequence ID" value="NM_001289894.1"/>
</dbReference>
<dbReference type="RefSeq" id="NP_033405.1">
    <molecule id="P40226-1"/>
    <property type="nucleotide sequence ID" value="NM_009379.3"/>
</dbReference>
<dbReference type="PDB" id="8U18">
    <property type="method" value="EM"/>
    <property type="resolution" value="3.60 A"/>
    <property type="chains" value="C=22-184"/>
</dbReference>
<dbReference type="PDB" id="8VU5">
    <property type="method" value="EM"/>
    <property type="resolution" value="3.39 A"/>
    <property type="chains" value="A=22-184"/>
</dbReference>
<dbReference type="PDBsum" id="8U18"/>
<dbReference type="PDBsum" id="8VU5"/>
<dbReference type="EMDB" id="EMD-41805"/>
<dbReference type="EMDB" id="EMD-43526"/>
<dbReference type="SMR" id="P40226"/>
<dbReference type="FunCoup" id="P40226">
    <property type="interactions" value="540"/>
</dbReference>
<dbReference type="STRING" id="10090.ENSMUSP00000111097"/>
<dbReference type="GlyCosmos" id="P40226">
    <property type="glycosylation" value="7 sites, No reported glycans"/>
</dbReference>
<dbReference type="GlyGen" id="P40226">
    <property type="glycosylation" value="8 sites"/>
</dbReference>
<dbReference type="PhosphoSitePlus" id="P40226"/>
<dbReference type="PaxDb" id="10090-ENSMUSP00000111097"/>
<dbReference type="Antibodypedia" id="19145">
    <property type="antibodies" value="640 antibodies from 36 providers"/>
</dbReference>
<dbReference type="DNASU" id="21832"/>
<dbReference type="Ensembl" id="ENSMUST00000076422.13">
    <molecule id="P40226-1"/>
    <property type="protein sequence ID" value="ENSMUSP00000075756.6"/>
    <property type="gene ID" value="ENSMUSG00000022847.16"/>
</dbReference>
<dbReference type="Ensembl" id="ENSMUST00000115437.4">
    <molecule id="P40226-1"/>
    <property type="protein sequence ID" value="ENSMUSP00000111097.3"/>
    <property type="gene ID" value="ENSMUSG00000022847.16"/>
</dbReference>
<dbReference type="GeneID" id="21832"/>
<dbReference type="KEGG" id="mmu:21832"/>
<dbReference type="UCSC" id="uc007yra.2">
    <molecule id="P40226-1"/>
    <property type="organism name" value="mouse"/>
</dbReference>
<dbReference type="UCSC" id="uc033gyk.1">
    <molecule id="P40226-2"/>
    <property type="organism name" value="mouse"/>
</dbReference>
<dbReference type="AGR" id="MGI:101875"/>
<dbReference type="CTD" id="7066"/>
<dbReference type="MGI" id="MGI:101875">
    <property type="gene designation" value="Thpo"/>
</dbReference>
<dbReference type="VEuPathDB" id="HostDB:ENSMUSG00000022847"/>
<dbReference type="eggNOG" id="ENOG502S9T0">
    <property type="taxonomic scope" value="Eukaryota"/>
</dbReference>
<dbReference type="GeneTree" id="ENSGT00390000006294"/>
<dbReference type="HOGENOM" id="CLU_039844_0_0_1"/>
<dbReference type="InParanoid" id="P40226"/>
<dbReference type="PhylomeDB" id="P40226"/>
<dbReference type="TreeFam" id="TF338084"/>
<dbReference type="BioGRID-ORCS" id="21832">
    <property type="hits" value="1 hit in 78 CRISPR screens"/>
</dbReference>
<dbReference type="ChiTaRS" id="Thpo">
    <property type="organism name" value="mouse"/>
</dbReference>
<dbReference type="PRO" id="PR:P40226"/>
<dbReference type="Proteomes" id="UP000000589">
    <property type="component" value="Chromosome 16"/>
</dbReference>
<dbReference type="RNAct" id="P40226">
    <property type="molecule type" value="protein"/>
</dbReference>
<dbReference type="Bgee" id="ENSMUSG00000022847">
    <property type="expression patterns" value="Expressed in kidney vasculature and 73 other cell types or tissues"/>
</dbReference>
<dbReference type="ExpressionAtlas" id="P40226">
    <property type="expression patterns" value="baseline and differential"/>
</dbReference>
<dbReference type="GO" id="GO:0005615">
    <property type="term" value="C:extracellular space"/>
    <property type="evidence" value="ECO:0007669"/>
    <property type="project" value="UniProtKB-KW"/>
</dbReference>
<dbReference type="GO" id="GO:0005125">
    <property type="term" value="F:cytokine activity"/>
    <property type="evidence" value="ECO:0007669"/>
    <property type="project" value="UniProtKB-KW"/>
</dbReference>
<dbReference type="GO" id="GO:0005179">
    <property type="term" value="F:hormone activity"/>
    <property type="evidence" value="ECO:0007669"/>
    <property type="project" value="UniProtKB-KW"/>
</dbReference>
<dbReference type="GO" id="GO:0008283">
    <property type="term" value="P:cell population proliferation"/>
    <property type="evidence" value="ECO:0007669"/>
    <property type="project" value="InterPro"/>
</dbReference>
<dbReference type="GO" id="GO:0030219">
    <property type="term" value="P:megakaryocyte differentiation"/>
    <property type="evidence" value="ECO:0000250"/>
    <property type="project" value="UniProtKB"/>
</dbReference>
<dbReference type="GO" id="GO:0030099">
    <property type="term" value="P:myeloid cell differentiation"/>
    <property type="evidence" value="ECO:0000314"/>
    <property type="project" value="MGI"/>
</dbReference>
<dbReference type="GO" id="GO:0070374">
    <property type="term" value="P:positive regulation of ERK1 and ERK2 cascade"/>
    <property type="evidence" value="ECO:0000314"/>
    <property type="project" value="UniProtKB"/>
</dbReference>
<dbReference type="GO" id="GO:1902035">
    <property type="term" value="P:positive regulation of hematopoietic stem cell proliferation"/>
    <property type="evidence" value="ECO:0000266"/>
    <property type="project" value="MGI"/>
</dbReference>
<dbReference type="GO" id="GO:0045654">
    <property type="term" value="P:positive regulation of megakaryocyte differentiation"/>
    <property type="evidence" value="ECO:0000314"/>
    <property type="project" value="UniProtKB"/>
</dbReference>
<dbReference type="GO" id="GO:0051897">
    <property type="term" value="P:positive regulation of phosphatidylinositol 3-kinase/protein kinase B signal transduction"/>
    <property type="evidence" value="ECO:0000314"/>
    <property type="project" value="UniProtKB"/>
</dbReference>
<dbReference type="GO" id="GO:0001934">
    <property type="term" value="P:positive regulation of protein phosphorylation"/>
    <property type="evidence" value="ECO:0000314"/>
    <property type="project" value="UniProtKB"/>
</dbReference>
<dbReference type="GO" id="GO:0038163">
    <property type="term" value="P:thrombopoietin-mediated signaling pathway"/>
    <property type="evidence" value="ECO:0000314"/>
    <property type="project" value="UniProtKB"/>
</dbReference>
<dbReference type="FunFam" id="1.20.1250.10:FF:000015">
    <property type="entry name" value="thrombopoietin isoform X2"/>
    <property type="match status" value="1"/>
</dbReference>
<dbReference type="Gene3D" id="1.20.1250.10">
    <property type="match status" value="1"/>
</dbReference>
<dbReference type="InterPro" id="IPR009079">
    <property type="entry name" value="4_helix_cytokine-like_core"/>
</dbReference>
<dbReference type="InterPro" id="IPR019767">
    <property type="entry name" value="EPO/TPO_CS"/>
</dbReference>
<dbReference type="InterPro" id="IPR001323">
    <property type="entry name" value="EPO_TPO"/>
</dbReference>
<dbReference type="InterPro" id="IPR003978">
    <property type="entry name" value="Thrombopoietin"/>
</dbReference>
<dbReference type="PANTHER" id="PTHR10560">
    <property type="entry name" value="THROMBOPOIETIN"/>
    <property type="match status" value="1"/>
</dbReference>
<dbReference type="PANTHER" id="PTHR10560:SF0">
    <property type="entry name" value="THROMBOPOIETIN"/>
    <property type="match status" value="1"/>
</dbReference>
<dbReference type="Pfam" id="PF00758">
    <property type="entry name" value="EPO_TPO"/>
    <property type="match status" value="1"/>
</dbReference>
<dbReference type="PRINTS" id="PR01485">
    <property type="entry name" value="THROMBOPTN"/>
</dbReference>
<dbReference type="SUPFAM" id="SSF47266">
    <property type="entry name" value="4-helical cytokines"/>
    <property type="match status" value="1"/>
</dbReference>
<dbReference type="PROSITE" id="PS00817">
    <property type="entry name" value="EPO_TPO"/>
    <property type="match status" value="1"/>
</dbReference>
<accession>P40226</accession>
<reference key="1">
    <citation type="journal article" date="1994" name="Nature">
        <title>Cloning and expression of murine thrombopoietin cDNA and stimulation of platelet production in vivo.</title>
        <authorList>
            <person name="Lok S."/>
            <person name="Kaushansky K."/>
            <person name="Holly R.D."/>
            <person name="Kuijper J.L."/>
            <person name="Lofton-Day C.E."/>
            <person name="Oort P.J."/>
            <person name="Grant F.J."/>
            <person name="Heipel M.D."/>
            <person name="Burkhead S.K."/>
            <person name="Kramer J.M."/>
            <person name="Bell L.A.N."/>
            <person name="Sprecher C.A."/>
            <person name="Blumberg H."/>
            <person name="Johnson R."/>
            <person name="Prunkard D."/>
            <person name="Ching A.F.T."/>
            <person name="Mathewes S.L."/>
            <person name="Bailey M.C."/>
            <person name="Forstrom J.W."/>
            <person name="Buddle M.M."/>
            <person name="Osborn S.G."/>
            <person name="Evans S.J."/>
            <person name="Sheppard P.O."/>
            <person name="Presnell S.R."/>
            <person name="O'Hara P.J."/>
            <person name="Hagen F.S."/>
            <person name="Roth G.J."/>
            <person name="Foster D.C."/>
        </authorList>
    </citation>
    <scope>NUCLEOTIDE SEQUENCE [MRNA] (ISOFORM 1)</scope>
    <source>
        <tissue>Kidney</tissue>
    </source>
</reference>
<reference key="2">
    <citation type="journal article" date="1994" name="Cell">
        <title>Identification and cloning of a megakaryocyte growth and development factor that is a ligand for the cytokine receptor Mpl.</title>
        <authorList>
            <person name="Bartley T.D."/>
            <person name="Bogenberger J."/>
            <person name="Hunt P."/>
            <person name="Li Y.-S."/>
            <person name="Lu H.S."/>
            <person name="Martin F."/>
            <person name="Chang M.-S."/>
            <person name="Samal B.B."/>
            <person name="Nichol J.L."/>
            <person name="Swift S."/>
            <person name="Johnson M.J."/>
            <person name="Hsu R.-Y."/>
            <person name="Parker V.P."/>
            <person name="Suggs S."/>
            <person name="Skrine J.D."/>
            <person name="Merewether L.A."/>
            <person name="Clogson C."/>
            <person name="Hsu E."/>
            <person name="Hokom M.M."/>
            <person name="Hornkohl A."/>
            <person name="Choi E."/>
            <person name="Pangelinan M."/>
            <person name="Sun Y."/>
            <person name="Mar V."/>
            <person name="McNich J."/>
            <person name="Simonet L."/>
            <person name="Jacobsen F."/>
            <person name="Xie C."/>
            <person name="Shutter J."/>
            <person name="Chute H."/>
            <person name="Basu R."/>
            <person name="Selander L."/>
            <person name="Trollinger D."/>
            <person name="Sieu L."/>
            <person name="Padilla D."/>
            <person name="Trail G."/>
            <person name="Elliott G."/>
            <person name="Izumi R."/>
            <person name="Covey T."/>
            <person name="Crouse J."/>
            <person name="Garcia A."/>
            <person name="Xu W."/>
            <person name="del Castillo J."/>
            <person name="Biron J."/>
            <person name="Cole S."/>
            <person name="Hu M.C.-T."/>
            <person name="Pacifici R."/>
            <person name="Ponting I."/>
            <person name="Saris C."/>
            <person name="Wen D."/>
            <person name="Yung Y.P."/>
            <person name="Lin H."/>
            <person name="Bosselman R.A."/>
        </authorList>
    </citation>
    <scope>NUCLEOTIDE SEQUENCE [MRNA] (ISOFORM 1)</scope>
    <source>
        <tissue>Liver</tissue>
    </source>
</reference>
<reference key="3">
    <citation type="journal article" date="1995" name="Blood">
        <title>Genomic structure, chromosomal localization, and conserved alternative splice forms of thrombopoietin.</title>
        <authorList>
            <person name="Gurney A.L."/>
            <person name="Kuang W.-J."/>
            <person name="Xie M.-H."/>
            <person name="Malloy B.E."/>
            <person name="Eaton D.L."/>
            <person name="de Sauvage F.J."/>
        </authorList>
    </citation>
    <scope>NUCLEOTIDE SEQUENCE [MRNA] (ISOFORMS 1 AND 2)</scope>
</reference>
<reference key="4">
    <citation type="journal article" date="2004" name="Genome Res.">
        <title>The status, quality, and expansion of the NIH full-length cDNA project: the Mammalian Gene Collection (MGC).</title>
        <authorList>
            <consortium name="The MGC Project Team"/>
        </authorList>
    </citation>
    <scope>NUCLEOTIDE SEQUENCE [LARGE SCALE MRNA] (ISOFORM 1)</scope>
    <source>
        <strain>FVB/N</strain>
        <tissue>Mammary gland</tissue>
    </source>
</reference>
<reference key="5">
    <citation type="journal article" date="2012" name="J. Thromb. Haemost.">
        <title>Diurnal expression of the thrombopoietin gene is regulated by CLOCK.</title>
        <authorList>
            <person name="Tracey C.J."/>
            <person name="Pan X."/>
            <person name="Catterson J.H."/>
            <person name="Harmar A.J."/>
            <person name="Hussain M.M."/>
            <person name="Hartley P.S."/>
        </authorList>
    </citation>
    <scope>INDUCTION</scope>
</reference>
<protein>
    <recommendedName>
        <fullName>Thrombopoietin</fullName>
    </recommendedName>
    <alternativeName>
        <fullName>C-mpl ligand</fullName>
        <shortName>ML</shortName>
    </alternativeName>
    <alternativeName>
        <fullName>Megakaryocyte colony-stimulating factor</fullName>
    </alternativeName>
    <alternativeName>
        <fullName>Megakaryocyte growth and development factor</fullName>
        <shortName>MGDF</shortName>
    </alternativeName>
    <alternativeName>
        <fullName>Myeloproliferative leukemia virus oncogene ligand</fullName>
    </alternativeName>
</protein>
<proteinExistence type="evidence at protein level"/>
<evidence type="ECO:0000250" key="1">
    <source>
        <dbReference type="UniProtKB" id="P40225"/>
    </source>
</evidence>
<evidence type="ECO:0000255" key="2"/>
<evidence type="ECO:0000256" key="3">
    <source>
        <dbReference type="SAM" id="MobiDB-lite"/>
    </source>
</evidence>
<evidence type="ECO:0000269" key="4">
    <source>
    </source>
</evidence>
<evidence type="ECO:0000303" key="5">
    <source>
    </source>
</evidence>
<evidence type="ECO:0000305" key="6"/>
<evidence type="ECO:0007829" key="7">
    <source>
        <dbReference type="PDB" id="8VU5"/>
    </source>
</evidence>
<sequence length="356" mass="37836">MELTDLLLAAMLLAVARLTLSSPVAPACDPRLLNKLLRDSHLLHSRLSQCPDVDPLSIPVLLPAVDFSLGEWKTQTEQSKAQDILGAVSLLLEGVMAARGQLEPSCLSSLLGQLSGQVRLLLGALQGLLGTQLPLQGRTTAHKDPNALFLSLQQLLRGKVRFLLLVEGPTLCVRRTLPTTAVPSSTSQLLTLNKFPNRTSGLLETNFSVTARTAGPGLLSRLQGFRVKITPGQLNQTSRSPVQISGYLNRTHGPVNGTHGLFAGTSLQTLEASDISPGAFNKGSLAFNLQGGLPPSPSLAPDGHTPFPPSPALPTTHGSPPQLHPLFPDPSTTMPNSTAPHPVTMYPHPRNLSQET</sequence>